<dbReference type="EMBL" id="BX640452">
    <property type="protein sequence ID" value="CAE35280.1"/>
    <property type="molecule type" value="Genomic_DNA"/>
</dbReference>
<dbReference type="RefSeq" id="WP_003815895.1">
    <property type="nucleotide sequence ID" value="NC_002927.3"/>
</dbReference>
<dbReference type="SMR" id="Q7WDS1"/>
<dbReference type="KEGG" id="bbr:BB4916"/>
<dbReference type="eggNOG" id="COG4108">
    <property type="taxonomic scope" value="Bacteria"/>
</dbReference>
<dbReference type="HOGENOM" id="CLU_002794_2_1_4"/>
<dbReference type="Proteomes" id="UP000001027">
    <property type="component" value="Chromosome"/>
</dbReference>
<dbReference type="GO" id="GO:0005829">
    <property type="term" value="C:cytosol"/>
    <property type="evidence" value="ECO:0007669"/>
    <property type="project" value="TreeGrafter"/>
</dbReference>
<dbReference type="GO" id="GO:0005525">
    <property type="term" value="F:GTP binding"/>
    <property type="evidence" value="ECO:0007669"/>
    <property type="project" value="UniProtKB-UniRule"/>
</dbReference>
<dbReference type="GO" id="GO:0003924">
    <property type="term" value="F:GTPase activity"/>
    <property type="evidence" value="ECO:0007669"/>
    <property type="project" value="InterPro"/>
</dbReference>
<dbReference type="GO" id="GO:0016150">
    <property type="term" value="F:translation release factor activity, codon nonspecific"/>
    <property type="evidence" value="ECO:0007669"/>
    <property type="project" value="TreeGrafter"/>
</dbReference>
<dbReference type="GO" id="GO:0016149">
    <property type="term" value="F:translation release factor activity, codon specific"/>
    <property type="evidence" value="ECO:0007669"/>
    <property type="project" value="UniProtKB-UniRule"/>
</dbReference>
<dbReference type="GO" id="GO:0006449">
    <property type="term" value="P:regulation of translational termination"/>
    <property type="evidence" value="ECO:0007669"/>
    <property type="project" value="UniProtKB-UniRule"/>
</dbReference>
<dbReference type="CDD" id="cd04169">
    <property type="entry name" value="RF3"/>
    <property type="match status" value="1"/>
</dbReference>
<dbReference type="FunFam" id="3.30.70.3280:FF:000001">
    <property type="entry name" value="Peptide chain release factor 3"/>
    <property type="match status" value="1"/>
</dbReference>
<dbReference type="FunFam" id="3.40.50.300:FF:000542">
    <property type="entry name" value="Peptide chain release factor 3"/>
    <property type="match status" value="1"/>
</dbReference>
<dbReference type="Gene3D" id="3.40.50.300">
    <property type="entry name" value="P-loop containing nucleotide triphosphate hydrolases"/>
    <property type="match status" value="2"/>
</dbReference>
<dbReference type="Gene3D" id="3.30.70.3280">
    <property type="entry name" value="Peptide chain release factor 3, domain III"/>
    <property type="match status" value="1"/>
</dbReference>
<dbReference type="HAMAP" id="MF_00072">
    <property type="entry name" value="Rel_fac_3"/>
    <property type="match status" value="1"/>
</dbReference>
<dbReference type="InterPro" id="IPR053905">
    <property type="entry name" value="EF-G-like_DII"/>
</dbReference>
<dbReference type="InterPro" id="IPR035647">
    <property type="entry name" value="EFG_III/V"/>
</dbReference>
<dbReference type="InterPro" id="IPR031157">
    <property type="entry name" value="G_TR_CS"/>
</dbReference>
<dbReference type="InterPro" id="IPR027417">
    <property type="entry name" value="P-loop_NTPase"/>
</dbReference>
<dbReference type="InterPro" id="IPR004548">
    <property type="entry name" value="PrfC"/>
</dbReference>
<dbReference type="InterPro" id="IPR032090">
    <property type="entry name" value="RF3_C"/>
</dbReference>
<dbReference type="InterPro" id="IPR038467">
    <property type="entry name" value="RF3_dom_3_sf"/>
</dbReference>
<dbReference type="InterPro" id="IPR041732">
    <property type="entry name" value="RF3_GTP-bd"/>
</dbReference>
<dbReference type="InterPro" id="IPR005225">
    <property type="entry name" value="Small_GTP-bd"/>
</dbReference>
<dbReference type="InterPro" id="IPR000795">
    <property type="entry name" value="T_Tr_GTP-bd_dom"/>
</dbReference>
<dbReference type="InterPro" id="IPR009000">
    <property type="entry name" value="Transl_B-barrel_sf"/>
</dbReference>
<dbReference type="NCBIfam" id="TIGR00503">
    <property type="entry name" value="prfC"/>
    <property type="match status" value="1"/>
</dbReference>
<dbReference type="NCBIfam" id="NF001964">
    <property type="entry name" value="PRK00741.1"/>
    <property type="match status" value="1"/>
</dbReference>
<dbReference type="NCBIfam" id="TIGR00231">
    <property type="entry name" value="small_GTP"/>
    <property type="match status" value="1"/>
</dbReference>
<dbReference type="PANTHER" id="PTHR43556">
    <property type="entry name" value="PEPTIDE CHAIN RELEASE FACTOR RF3"/>
    <property type="match status" value="1"/>
</dbReference>
<dbReference type="PANTHER" id="PTHR43556:SF2">
    <property type="entry name" value="PEPTIDE CHAIN RELEASE FACTOR RF3"/>
    <property type="match status" value="1"/>
</dbReference>
<dbReference type="Pfam" id="PF22042">
    <property type="entry name" value="EF-G_D2"/>
    <property type="match status" value="1"/>
</dbReference>
<dbReference type="Pfam" id="PF00009">
    <property type="entry name" value="GTP_EFTU"/>
    <property type="match status" value="1"/>
</dbReference>
<dbReference type="Pfam" id="PF16658">
    <property type="entry name" value="RF3_C"/>
    <property type="match status" value="1"/>
</dbReference>
<dbReference type="PRINTS" id="PR00315">
    <property type="entry name" value="ELONGATNFCT"/>
</dbReference>
<dbReference type="SUPFAM" id="SSF54980">
    <property type="entry name" value="EF-G C-terminal domain-like"/>
    <property type="match status" value="1"/>
</dbReference>
<dbReference type="SUPFAM" id="SSF52540">
    <property type="entry name" value="P-loop containing nucleoside triphosphate hydrolases"/>
    <property type="match status" value="1"/>
</dbReference>
<dbReference type="SUPFAM" id="SSF50447">
    <property type="entry name" value="Translation proteins"/>
    <property type="match status" value="1"/>
</dbReference>
<dbReference type="PROSITE" id="PS00301">
    <property type="entry name" value="G_TR_1"/>
    <property type="match status" value="1"/>
</dbReference>
<dbReference type="PROSITE" id="PS51722">
    <property type="entry name" value="G_TR_2"/>
    <property type="match status" value="1"/>
</dbReference>
<reference key="1">
    <citation type="journal article" date="2003" name="Nat. Genet.">
        <title>Comparative analysis of the genome sequences of Bordetella pertussis, Bordetella parapertussis and Bordetella bronchiseptica.</title>
        <authorList>
            <person name="Parkhill J."/>
            <person name="Sebaihia M."/>
            <person name="Preston A."/>
            <person name="Murphy L.D."/>
            <person name="Thomson N.R."/>
            <person name="Harris D.E."/>
            <person name="Holden M.T.G."/>
            <person name="Churcher C.M."/>
            <person name="Bentley S.D."/>
            <person name="Mungall K.L."/>
            <person name="Cerdeno-Tarraga A.-M."/>
            <person name="Temple L."/>
            <person name="James K.D."/>
            <person name="Harris B."/>
            <person name="Quail M.A."/>
            <person name="Achtman M."/>
            <person name="Atkin R."/>
            <person name="Baker S."/>
            <person name="Basham D."/>
            <person name="Bason N."/>
            <person name="Cherevach I."/>
            <person name="Chillingworth T."/>
            <person name="Collins M."/>
            <person name="Cronin A."/>
            <person name="Davis P."/>
            <person name="Doggett J."/>
            <person name="Feltwell T."/>
            <person name="Goble A."/>
            <person name="Hamlin N."/>
            <person name="Hauser H."/>
            <person name="Holroyd S."/>
            <person name="Jagels K."/>
            <person name="Leather S."/>
            <person name="Moule S."/>
            <person name="Norberczak H."/>
            <person name="O'Neil S."/>
            <person name="Ormond D."/>
            <person name="Price C."/>
            <person name="Rabbinowitsch E."/>
            <person name="Rutter S."/>
            <person name="Sanders M."/>
            <person name="Saunders D."/>
            <person name="Seeger K."/>
            <person name="Sharp S."/>
            <person name="Simmonds M."/>
            <person name="Skelton J."/>
            <person name="Squares R."/>
            <person name="Squares S."/>
            <person name="Stevens K."/>
            <person name="Unwin L."/>
            <person name="Whitehead S."/>
            <person name="Barrell B.G."/>
            <person name="Maskell D.J."/>
        </authorList>
    </citation>
    <scope>NUCLEOTIDE SEQUENCE [LARGE SCALE GENOMIC DNA]</scope>
    <source>
        <strain>ATCC BAA-588 / NCTC 13252 / RB50</strain>
    </source>
</reference>
<name>RF3_BORBR</name>
<gene>
    <name evidence="1" type="primary">prfC</name>
    <name type="ordered locus">BB4916</name>
</gene>
<protein>
    <recommendedName>
        <fullName evidence="1">Peptide chain release factor 3</fullName>
        <shortName evidence="1">RF-3</shortName>
    </recommendedName>
</protein>
<evidence type="ECO:0000255" key="1">
    <source>
        <dbReference type="HAMAP-Rule" id="MF_00072"/>
    </source>
</evidence>
<keyword id="KW-0963">Cytoplasm</keyword>
<keyword id="KW-0342">GTP-binding</keyword>
<keyword id="KW-0547">Nucleotide-binding</keyword>
<keyword id="KW-0648">Protein biosynthesis</keyword>
<comment type="function">
    <text evidence="1">Increases the formation of ribosomal termination complexes and stimulates activities of RF-1 and RF-2. It binds guanine nucleotides and has strong preference for UGA stop codons. It may interact directly with the ribosome. The stimulation of RF-1 and RF-2 is significantly reduced by GTP and GDP, but not by GMP.</text>
</comment>
<comment type="subcellular location">
    <subcellularLocation>
        <location evidence="1">Cytoplasm</location>
    </subcellularLocation>
</comment>
<comment type="similarity">
    <text evidence="1">Belongs to the TRAFAC class translation factor GTPase superfamily. Classic translation factor GTPase family. PrfC subfamily.</text>
</comment>
<sequence length="535" mass="59264">MNIPQEVARRRTFAIISHPDAGKTTLTEKLLLFAGAIQIAGSVKARKASRHASSDWMEIEKQRGISVASSVMQMEYRDCVINLLDTPGHQDFSEDTYRVLTAVDAALMVIDAANGVEPQTIRLLQVCRARNTPIITFINKLDREVREPLELLSEIEGHLGMDTVPFSWPVGMGKAFGGVFDIRRNRMRIFRAGQERRGEDDEFIDGLDNPEIPRRFGAAFAQASGEIELINEAAPAFDREAFLAGKQTPVFFGSAINNFGVQEVLDALVDQAPAPGPRQALEREVRPDEPKFTGVVFKVQANMDPAHRDRVAFVRVSSGRFERGMRLKVARTGKEMRPNNVVSFLSQRRELLDEAYAGDVIGIPNHGVLQLGDVLTEGESLRFTGLPFFAPELFQAVEVKDPLRTKQLRVGLTQLGEEGAIQVFRPEAAGGALLLGAVGQLQFEVVAHRLKTEYGVDARMMPSRYTSARWITSDDPRALRKFMDANAAHIAYDVVDAAAFLITSPAQLRVAEDLYPNVKFHALREHGGKVFGDKA</sequence>
<accession>Q7WDS1</accession>
<feature type="chain" id="PRO_0000210930" description="Peptide chain release factor 3">
    <location>
        <begin position="1"/>
        <end position="535"/>
    </location>
</feature>
<feature type="domain" description="tr-type G">
    <location>
        <begin position="8"/>
        <end position="278"/>
    </location>
</feature>
<feature type="binding site" evidence="1">
    <location>
        <begin position="17"/>
        <end position="24"/>
    </location>
    <ligand>
        <name>GTP</name>
        <dbReference type="ChEBI" id="CHEBI:37565"/>
    </ligand>
</feature>
<feature type="binding site" evidence="1">
    <location>
        <begin position="85"/>
        <end position="89"/>
    </location>
    <ligand>
        <name>GTP</name>
        <dbReference type="ChEBI" id="CHEBI:37565"/>
    </ligand>
</feature>
<feature type="binding site" evidence="1">
    <location>
        <begin position="139"/>
        <end position="142"/>
    </location>
    <ligand>
        <name>GTP</name>
        <dbReference type="ChEBI" id="CHEBI:37565"/>
    </ligand>
</feature>
<proteinExistence type="inferred from homology"/>
<organism>
    <name type="scientific">Bordetella bronchiseptica (strain ATCC BAA-588 / NCTC 13252 / RB50)</name>
    <name type="common">Alcaligenes bronchisepticus</name>
    <dbReference type="NCBI Taxonomy" id="257310"/>
    <lineage>
        <taxon>Bacteria</taxon>
        <taxon>Pseudomonadati</taxon>
        <taxon>Pseudomonadota</taxon>
        <taxon>Betaproteobacteria</taxon>
        <taxon>Burkholderiales</taxon>
        <taxon>Alcaligenaceae</taxon>
        <taxon>Bordetella</taxon>
    </lineage>
</organism>